<name>NAS28_CAEEL</name>
<reference key="1">
    <citation type="journal article" date="1998" name="Science">
        <title>Genome sequence of the nematode C. elegans: a platform for investigating biology.</title>
        <authorList>
            <consortium name="The C. elegans sequencing consortium"/>
        </authorList>
    </citation>
    <scope>NUCLEOTIDE SEQUENCE [LARGE SCALE GENOMIC DNA]</scope>
    <source>
        <strain>Bristol N2</strain>
    </source>
</reference>
<reference key="2">
    <citation type="journal article" date="2003" name="Eur. J. Biochem.">
        <title>The astacin protein family in Caenorhabditis elegans.</title>
        <authorList>
            <person name="Moehrlen F."/>
            <person name="Hutter H."/>
            <person name="Zwilling R."/>
        </authorList>
    </citation>
    <scope>NUCLEOTIDE SEQUENCE [MRNA] OF 67-404</scope>
    <source>
        <strain>Bristol N2</strain>
    </source>
</reference>
<reference key="3">
    <citation type="journal article" date="2007" name="Mol. Cell. Proteomics">
        <title>Proteomics reveals N-linked glycoprotein diversity in Caenorhabditis elegans and suggests an atypical translocation mechanism for integral membrane proteins.</title>
        <authorList>
            <person name="Kaji H."/>
            <person name="Kamiie J."/>
            <person name="Kawakami H."/>
            <person name="Kido K."/>
            <person name="Yamauchi Y."/>
            <person name="Shinkawa T."/>
            <person name="Taoka M."/>
            <person name="Takahashi N."/>
            <person name="Isobe T."/>
        </authorList>
    </citation>
    <scope>GLYCOSYLATION [LARGE SCALE ANALYSIS] AT ASN-317</scope>
    <scope>IDENTIFICATION BY MASS SPECTROMETRY</scope>
    <source>
        <strain>Bristol N2</strain>
    </source>
</reference>
<keyword id="KW-0165">Cleavage on pair of basic residues</keyword>
<keyword id="KW-1015">Disulfide bond</keyword>
<keyword id="KW-0245">EGF-like domain</keyword>
<keyword id="KW-0325">Glycoprotein</keyword>
<keyword id="KW-0378">Hydrolase</keyword>
<keyword id="KW-0479">Metal-binding</keyword>
<keyword id="KW-0482">Metalloprotease</keyword>
<keyword id="KW-0645">Protease</keyword>
<keyword id="KW-1185">Reference proteome</keyword>
<keyword id="KW-0964">Secreted</keyword>
<keyword id="KW-0732">Signal</keyword>
<keyword id="KW-0862">Zinc</keyword>
<keyword id="KW-0865">Zymogen</keyword>
<gene>
    <name type="primary">nas-28</name>
    <name type="ORF">F42A10.8</name>
</gene>
<organism>
    <name type="scientific">Caenorhabditis elegans</name>
    <dbReference type="NCBI Taxonomy" id="6239"/>
    <lineage>
        <taxon>Eukaryota</taxon>
        <taxon>Metazoa</taxon>
        <taxon>Ecdysozoa</taxon>
        <taxon>Nematoda</taxon>
        <taxon>Chromadorea</taxon>
        <taxon>Rhabditida</taxon>
        <taxon>Rhabditina</taxon>
        <taxon>Rhabditomorpha</taxon>
        <taxon>Rhabditoidea</taxon>
        <taxon>Rhabditidae</taxon>
        <taxon>Peloderinae</taxon>
        <taxon>Caenorhabditis</taxon>
    </lineage>
</organism>
<protein>
    <recommendedName>
        <fullName>Zinc metalloproteinase nas-28</fullName>
        <ecNumber evidence="1">3.4.24.-</ecNumber>
    </recommendedName>
    <alternativeName>
        <fullName>Nematode astacin 28</fullName>
    </alternativeName>
</protein>
<feature type="signal peptide" evidence="2">
    <location>
        <begin position="1"/>
        <end position="14"/>
    </location>
</feature>
<feature type="propeptide" id="PRO_0000442675" evidence="2">
    <location>
        <begin position="15"/>
        <end position="120"/>
    </location>
</feature>
<feature type="chain" id="PRO_0000028932" description="Zinc metalloproteinase nas-28">
    <location>
        <begin position="121"/>
        <end position="497"/>
    </location>
</feature>
<feature type="domain" description="Peptidase M12A" evidence="4">
    <location>
        <begin position="121"/>
        <end position="319"/>
    </location>
</feature>
<feature type="domain" description="EGF-like">
    <location>
        <begin position="324"/>
        <end position="354"/>
    </location>
</feature>
<feature type="domain" description="CUB" evidence="3">
    <location>
        <begin position="364"/>
        <end position="483"/>
    </location>
</feature>
<feature type="active site" evidence="4">
    <location>
        <position position="215"/>
    </location>
</feature>
<feature type="binding site" evidence="4">
    <location>
        <position position="214"/>
    </location>
    <ligand>
        <name>Zn(2+)</name>
        <dbReference type="ChEBI" id="CHEBI:29105"/>
        <note>catalytic</note>
    </ligand>
</feature>
<feature type="binding site" evidence="4">
    <location>
        <position position="218"/>
    </location>
    <ligand>
        <name>Zn(2+)</name>
        <dbReference type="ChEBI" id="CHEBI:29105"/>
        <note>catalytic</note>
    </ligand>
</feature>
<feature type="binding site" evidence="4">
    <location>
        <position position="224"/>
    </location>
    <ligand>
        <name>Zn(2+)</name>
        <dbReference type="ChEBI" id="CHEBI:29105"/>
        <note>catalytic</note>
    </ligand>
</feature>
<feature type="glycosylation site" description="N-linked (GlcNAc...) asparagine" evidence="2">
    <location>
        <position position="76"/>
    </location>
</feature>
<feature type="glycosylation site" description="N-linked (GlcNAc...) asparagine" evidence="5">
    <location>
        <position position="317"/>
    </location>
</feature>
<feature type="glycosylation site" description="N-linked (GlcNAc...) asparagine" evidence="2">
    <location>
        <position position="394"/>
    </location>
</feature>
<feature type="disulfide bond" evidence="4">
    <location>
        <begin position="164"/>
        <end position="318"/>
    </location>
</feature>
<feature type="disulfide bond" evidence="4">
    <location>
        <begin position="185"/>
        <end position="206"/>
    </location>
</feature>
<feature type="disulfide bond" evidence="3">
    <location>
        <begin position="328"/>
        <end position="339"/>
    </location>
</feature>
<feature type="disulfide bond" evidence="3">
    <location>
        <begin position="331"/>
        <end position="342"/>
    </location>
</feature>
<feature type="disulfide bond" evidence="3">
    <location>
        <begin position="344"/>
        <end position="353"/>
    </location>
</feature>
<feature type="disulfide bond" evidence="3">
    <location>
        <begin position="364"/>
        <end position="398"/>
    </location>
</feature>
<feature type="disulfide bond" evidence="3">
    <location>
        <begin position="427"/>
        <end position="447"/>
    </location>
</feature>
<feature type="sequence conflict" description="In Ref. 2; CAD99197." evidence="6" ref="2">
    <original>C</original>
    <variation>G</variation>
    <location>
        <position position="339"/>
    </location>
</feature>
<evidence type="ECO:0000250" key="1">
    <source>
        <dbReference type="UniProtKB" id="A8Q2D1"/>
    </source>
</evidence>
<evidence type="ECO:0000255" key="2"/>
<evidence type="ECO:0000255" key="3">
    <source>
        <dbReference type="PROSITE-ProRule" id="PRU00059"/>
    </source>
</evidence>
<evidence type="ECO:0000255" key="4">
    <source>
        <dbReference type="PROSITE-ProRule" id="PRU01211"/>
    </source>
</evidence>
<evidence type="ECO:0000269" key="5">
    <source>
    </source>
</evidence>
<evidence type="ECO:0000305" key="6"/>
<accession>P98061</accession>
<accession>Q7Z0P0</accession>
<proteinExistence type="evidence at protein level"/>
<sequence>MFFPVVFFIPFVLGAPTQKALEKILVDNNPDSVTNREKIRGIIDKAFENRVPRVQGRQGVAPPVTFAALNYGPKNNQTKKFEELNQDINEYTFESDIMLNEKQAKHIATAIENGNYRSKRQAIVDTTNFWSVSVPIFYQFDTKLSATNIANVRKAIQFWNDNSCLSFKEDNNAKNRLFLSSAGGCWSYVGKQVDMPYQMVSVGPNCDTFGTATHELMHAIGFWHQQSRADRDNYVYVDFSNIIPSQAYNFQKMAVDQAQLLNLPYDYGSVMQYYPYAFAVDSSKYTILAKENGFQNSMGQREAPAFSDIIGVNKLYNCTSQCKIQMKCSNCGITDSRNCNQCKCPRYFTGASCDSLPSGTAPNCNGAVLQATSSWETFDAKAGDPSSFSSSTDNSTNCYWHIKAPEGQQIEFKMTKTPLAAICMQECPWQSIEVNLGKFDLFGMITCCDTILNQVFTSELNMIALRGIIRYNQLTFSIQYRAVPSSKPASTNACLNQ</sequence>
<comment type="function">
    <text evidence="1">Metalloprotease.</text>
</comment>
<comment type="cofactor">
    <cofactor evidence="4">
        <name>Zn(2+)</name>
        <dbReference type="ChEBI" id="CHEBI:29105"/>
    </cofactor>
    <text evidence="4">Binds 1 zinc ion per subunit.</text>
</comment>
<comment type="subcellular location">
    <subcellularLocation>
        <location evidence="6">Secreted</location>
    </subcellularLocation>
</comment>
<comment type="sequence caution" evidence="6">
    <conflict type="frameshift">
        <sequence resource="EMBL-CDS" id="CAD99197"/>
    </conflict>
</comment>
<dbReference type="EC" id="3.4.24.-" evidence="1"/>
<dbReference type="EMBL" id="FO080631">
    <property type="protein sequence ID" value="CCD65318.1"/>
    <property type="molecule type" value="Genomic_DNA"/>
</dbReference>
<dbReference type="EMBL" id="AJ561217">
    <property type="protein sequence ID" value="CAD99197.1"/>
    <property type="status" value="ALT_FRAME"/>
    <property type="molecule type" value="mRNA"/>
</dbReference>
<dbReference type="PIR" id="T30963">
    <property type="entry name" value="T30963"/>
</dbReference>
<dbReference type="RefSeq" id="NP_498342.3">
    <property type="nucleotide sequence ID" value="NM_065941.5"/>
</dbReference>
<dbReference type="SMR" id="P98061"/>
<dbReference type="FunCoup" id="P98061">
    <property type="interactions" value="4"/>
</dbReference>
<dbReference type="STRING" id="6239.F42A10.8.1"/>
<dbReference type="MEROPS" id="M12.A26"/>
<dbReference type="GlyCosmos" id="P98061">
    <property type="glycosylation" value="3 sites, No reported glycans"/>
</dbReference>
<dbReference type="iPTMnet" id="P98061"/>
<dbReference type="PaxDb" id="6239-F42A10.8"/>
<dbReference type="PeptideAtlas" id="P98061"/>
<dbReference type="EnsemblMetazoa" id="F42A10.8.1">
    <property type="protein sequence ID" value="F42A10.8.1"/>
    <property type="gene ID" value="WBGene00003546"/>
</dbReference>
<dbReference type="GeneID" id="185658"/>
<dbReference type="KEGG" id="cel:CELE_F42A10.8"/>
<dbReference type="UCSC" id="F42A10.8">
    <property type="organism name" value="c. elegans"/>
</dbReference>
<dbReference type="AGR" id="WB:WBGene00003546"/>
<dbReference type="CTD" id="185658"/>
<dbReference type="WormBase" id="F42A10.8">
    <property type="protein sequence ID" value="CE38958"/>
    <property type="gene ID" value="WBGene00003546"/>
    <property type="gene designation" value="nas-28"/>
</dbReference>
<dbReference type="eggNOG" id="KOG3714">
    <property type="taxonomic scope" value="Eukaryota"/>
</dbReference>
<dbReference type="HOGENOM" id="CLU_017286_1_5_1"/>
<dbReference type="InParanoid" id="P98061"/>
<dbReference type="OMA" id="FESDIML"/>
<dbReference type="OrthoDB" id="5866228at2759"/>
<dbReference type="PhylomeDB" id="P98061"/>
<dbReference type="PRO" id="PR:P98061"/>
<dbReference type="Proteomes" id="UP000001940">
    <property type="component" value="Chromosome III"/>
</dbReference>
<dbReference type="Bgee" id="WBGene00003546">
    <property type="expression patterns" value="Expressed in embryo and 3 other cell types or tissues"/>
</dbReference>
<dbReference type="GO" id="GO:0005576">
    <property type="term" value="C:extracellular region"/>
    <property type="evidence" value="ECO:0007669"/>
    <property type="project" value="UniProtKB-SubCell"/>
</dbReference>
<dbReference type="GO" id="GO:0004222">
    <property type="term" value="F:metalloendopeptidase activity"/>
    <property type="evidence" value="ECO:0000318"/>
    <property type="project" value="GO_Central"/>
</dbReference>
<dbReference type="GO" id="GO:0008270">
    <property type="term" value="F:zinc ion binding"/>
    <property type="evidence" value="ECO:0007669"/>
    <property type="project" value="InterPro"/>
</dbReference>
<dbReference type="GO" id="GO:0018996">
    <property type="term" value="P:molting cycle, collagen and cuticulin-based cuticle"/>
    <property type="evidence" value="ECO:0007669"/>
    <property type="project" value="InterPro"/>
</dbReference>
<dbReference type="GO" id="GO:0006508">
    <property type="term" value="P:proteolysis"/>
    <property type="evidence" value="ECO:0007669"/>
    <property type="project" value="UniProtKB-KW"/>
</dbReference>
<dbReference type="CDD" id="cd04280">
    <property type="entry name" value="ZnMc_astacin_like"/>
    <property type="match status" value="1"/>
</dbReference>
<dbReference type="FunFam" id="2.60.120.290:FF:000080">
    <property type="entry name" value="Zinc metalloproteinase"/>
    <property type="match status" value="1"/>
</dbReference>
<dbReference type="FunFam" id="3.40.390.10:FF:000028">
    <property type="entry name" value="Zinc metalloproteinase"/>
    <property type="match status" value="1"/>
</dbReference>
<dbReference type="Gene3D" id="3.40.390.10">
    <property type="entry name" value="Collagenase (Catalytic Domain)"/>
    <property type="match status" value="1"/>
</dbReference>
<dbReference type="Gene3D" id="2.60.120.290">
    <property type="entry name" value="Spermadhesin, CUB domain"/>
    <property type="match status" value="1"/>
</dbReference>
<dbReference type="InterPro" id="IPR034035">
    <property type="entry name" value="Astacin-like_dom"/>
</dbReference>
<dbReference type="InterPro" id="IPR000859">
    <property type="entry name" value="CUB_dom"/>
</dbReference>
<dbReference type="InterPro" id="IPR024079">
    <property type="entry name" value="MetalloPept_cat_dom_sf"/>
</dbReference>
<dbReference type="InterPro" id="IPR017050">
    <property type="entry name" value="Metallopeptidase_nem"/>
</dbReference>
<dbReference type="InterPro" id="IPR001506">
    <property type="entry name" value="Peptidase_M12A"/>
</dbReference>
<dbReference type="InterPro" id="IPR006026">
    <property type="entry name" value="Peptidase_Metallo"/>
</dbReference>
<dbReference type="InterPro" id="IPR035914">
    <property type="entry name" value="Sperma_CUB_dom_sf"/>
</dbReference>
<dbReference type="PANTHER" id="PTHR10127">
    <property type="entry name" value="DISCOIDIN, CUB, EGF, LAMININ , AND ZINC METALLOPROTEASE DOMAIN CONTAINING"/>
    <property type="match status" value="1"/>
</dbReference>
<dbReference type="PANTHER" id="PTHR10127:SF875">
    <property type="entry name" value="ZINC METALLOPROTEINASE NAS-28"/>
    <property type="match status" value="1"/>
</dbReference>
<dbReference type="Pfam" id="PF01400">
    <property type="entry name" value="Astacin"/>
    <property type="match status" value="1"/>
</dbReference>
<dbReference type="PIRSF" id="PIRSF036365">
    <property type="entry name" value="Astacin_nematoda"/>
    <property type="match status" value="1"/>
</dbReference>
<dbReference type="PRINTS" id="PR00480">
    <property type="entry name" value="ASTACIN"/>
</dbReference>
<dbReference type="SMART" id="SM00042">
    <property type="entry name" value="CUB"/>
    <property type="match status" value="1"/>
</dbReference>
<dbReference type="SMART" id="SM00235">
    <property type="entry name" value="ZnMc"/>
    <property type="match status" value="1"/>
</dbReference>
<dbReference type="SUPFAM" id="SSF55486">
    <property type="entry name" value="Metalloproteases ('zincins'), catalytic domain"/>
    <property type="match status" value="1"/>
</dbReference>
<dbReference type="SUPFAM" id="SSF49854">
    <property type="entry name" value="Spermadhesin, CUB domain"/>
    <property type="match status" value="1"/>
</dbReference>
<dbReference type="PROSITE" id="PS51864">
    <property type="entry name" value="ASTACIN"/>
    <property type="match status" value="1"/>
</dbReference>
<dbReference type="PROSITE" id="PS01180">
    <property type="entry name" value="CUB"/>
    <property type="match status" value="1"/>
</dbReference>
<dbReference type="PROSITE" id="PS00022">
    <property type="entry name" value="EGF_1"/>
    <property type="match status" value="1"/>
</dbReference>
<dbReference type="PROSITE" id="PS00142">
    <property type="entry name" value="ZINC_PROTEASE"/>
    <property type="match status" value="1"/>
</dbReference>